<keyword id="KW-0997">Cell inner membrane</keyword>
<keyword id="KW-1003">Cell membrane</keyword>
<keyword id="KW-0169">Cobalamin biosynthesis</keyword>
<keyword id="KW-0460">Magnesium</keyword>
<keyword id="KW-0472">Membrane</keyword>
<keyword id="KW-0808">Transferase</keyword>
<keyword id="KW-0812">Transmembrane</keyword>
<keyword id="KW-1133">Transmembrane helix</keyword>
<sequence length="248" mass="26008">MRGLVTAVRTLTVLPVPGKEAERFSSALFWFPVVGLFLGLLQAGAGYLAMLSGWPELAASMVLIAGVLLTRGMHADGFADMADGFFGGRDRESRLRIMKDPSVGSFGAIGLILLFLFKSIVLVKLLAFGLYPWIVSGVLLARLVQVALASMLPYARREGGTAAGFVEGAGIQHFVAAFLVALFILLLLMNGEMLPSGIGLSAAIAGAVLMSLLTIKKIGGVTGDVLGASSEFTEVLVWVSGVFLALCS</sequence>
<gene>
    <name evidence="1" type="primary">cobS</name>
    <name type="ordered locus">Cphamn1_1490</name>
</gene>
<feature type="chain" id="PRO_1000132561" description="Adenosylcobinamide-GDP ribazoletransferase">
    <location>
        <begin position="1"/>
        <end position="248"/>
    </location>
</feature>
<feature type="transmembrane region" description="Helical" evidence="1">
    <location>
        <begin position="28"/>
        <end position="48"/>
    </location>
</feature>
<feature type="transmembrane region" description="Helical" evidence="1">
    <location>
        <begin position="103"/>
        <end position="123"/>
    </location>
</feature>
<feature type="transmembrane region" description="Helical" evidence="1">
    <location>
        <begin position="126"/>
        <end position="146"/>
    </location>
</feature>
<feature type="transmembrane region" description="Helical" evidence="1">
    <location>
        <begin position="169"/>
        <end position="189"/>
    </location>
</feature>
<feature type="transmembrane region" description="Helical" evidence="1">
    <location>
        <begin position="193"/>
        <end position="213"/>
    </location>
</feature>
<feature type="transmembrane region" description="Helical" evidence="1">
    <location>
        <begin position="225"/>
        <end position="245"/>
    </location>
</feature>
<dbReference type="EC" id="2.7.8.26" evidence="1"/>
<dbReference type="EMBL" id="CP001101">
    <property type="protein sequence ID" value="ACE04416.1"/>
    <property type="molecule type" value="Genomic_DNA"/>
</dbReference>
<dbReference type="STRING" id="331678.Cphamn1_1490"/>
<dbReference type="KEGG" id="cpb:Cphamn1_1490"/>
<dbReference type="eggNOG" id="COG0368">
    <property type="taxonomic scope" value="Bacteria"/>
</dbReference>
<dbReference type="HOGENOM" id="CLU_057426_1_0_10"/>
<dbReference type="OrthoDB" id="9794626at2"/>
<dbReference type="UniPathway" id="UPA00148">
    <property type="reaction ID" value="UER00238"/>
</dbReference>
<dbReference type="GO" id="GO:0005886">
    <property type="term" value="C:plasma membrane"/>
    <property type="evidence" value="ECO:0007669"/>
    <property type="project" value="UniProtKB-SubCell"/>
</dbReference>
<dbReference type="GO" id="GO:0051073">
    <property type="term" value="F:adenosylcobinamide-GDP ribazoletransferase activity"/>
    <property type="evidence" value="ECO:0007669"/>
    <property type="project" value="UniProtKB-UniRule"/>
</dbReference>
<dbReference type="GO" id="GO:0008818">
    <property type="term" value="F:cobalamin 5'-phosphate synthase activity"/>
    <property type="evidence" value="ECO:0007669"/>
    <property type="project" value="UniProtKB-UniRule"/>
</dbReference>
<dbReference type="GO" id="GO:0009236">
    <property type="term" value="P:cobalamin biosynthetic process"/>
    <property type="evidence" value="ECO:0007669"/>
    <property type="project" value="UniProtKB-UniRule"/>
</dbReference>
<dbReference type="HAMAP" id="MF_00719">
    <property type="entry name" value="CobS"/>
    <property type="match status" value="1"/>
</dbReference>
<dbReference type="InterPro" id="IPR003805">
    <property type="entry name" value="CobS"/>
</dbReference>
<dbReference type="NCBIfam" id="TIGR00317">
    <property type="entry name" value="cobS"/>
    <property type="match status" value="1"/>
</dbReference>
<dbReference type="PANTHER" id="PTHR34148">
    <property type="entry name" value="ADENOSYLCOBINAMIDE-GDP RIBAZOLETRANSFERASE"/>
    <property type="match status" value="1"/>
</dbReference>
<dbReference type="PANTHER" id="PTHR34148:SF1">
    <property type="entry name" value="ADENOSYLCOBINAMIDE-GDP RIBAZOLETRANSFERASE"/>
    <property type="match status" value="1"/>
</dbReference>
<dbReference type="Pfam" id="PF02654">
    <property type="entry name" value="CobS"/>
    <property type="match status" value="1"/>
</dbReference>
<proteinExistence type="inferred from homology"/>
<organism>
    <name type="scientific">Chlorobium phaeobacteroides (strain BS1)</name>
    <dbReference type="NCBI Taxonomy" id="331678"/>
    <lineage>
        <taxon>Bacteria</taxon>
        <taxon>Pseudomonadati</taxon>
        <taxon>Chlorobiota</taxon>
        <taxon>Chlorobiia</taxon>
        <taxon>Chlorobiales</taxon>
        <taxon>Chlorobiaceae</taxon>
        <taxon>Chlorobium/Pelodictyon group</taxon>
        <taxon>Chlorobium</taxon>
    </lineage>
</organism>
<accession>B3EJP7</accession>
<name>COBS_CHLPB</name>
<reference key="1">
    <citation type="submission" date="2008-06" db="EMBL/GenBank/DDBJ databases">
        <title>Complete sequence of Chlorobium phaeobacteroides BS1.</title>
        <authorList>
            <consortium name="US DOE Joint Genome Institute"/>
            <person name="Lucas S."/>
            <person name="Copeland A."/>
            <person name="Lapidus A."/>
            <person name="Glavina del Rio T."/>
            <person name="Dalin E."/>
            <person name="Tice H."/>
            <person name="Bruce D."/>
            <person name="Goodwin L."/>
            <person name="Pitluck S."/>
            <person name="Schmutz J."/>
            <person name="Larimer F."/>
            <person name="Land M."/>
            <person name="Hauser L."/>
            <person name="Kyrpides N."/>
            <person name="Ovchinnikova G."/>
            <person name="Li T."/>
            <person name="Liu Z."/>
            <person name="Zhao F."/>
            <person name="Overmann J."/>
            <person name="Bryant D.A."/>
            <person name="Richardson P."/>
        </authorList>
    </citation>
    <scope>NUCLEOTIDE SEQUENCE [LARGE SCALE GENOMIC DNA]</scope>
    <source>
        <strain>BS1</strain>
    </source>
</reference>
<evidence type="ECO:0000255" key="1">
    <source>
        <dbReference type="HAMAP-Rule" id="MF_00719"/>
    </source>
</evidence>
<comment type="function">
    <text evidence="1">Joins adenosylcobinamide-GDP and alpha-ribazole to generate adenosylcobalamin (Ado-cobalamin). Also synthesizes adenosylcobalamin 5'-phosphate from adenosylcobinamide-GDP and alpha-ribazole 5'-phosphate.</text>
</comment>
<comment type="catalytic activity">
    <reaction evidence="1">
        <text>alpha-ribazole + adenosylcob(III)inamide-GDP = adenosylcob(III)alamin + GMP + H(+)</text>
        <dbReference type="Rhea" id="RHEA:16049"/>
        <dbReference type="ChEBI" id="CHEBI:10329"/>
        <dbReference type="ChEBI" id="CHEBI:15378"/>
        <dbReference type="ChEBI" id="CHEBI:18408"/>
        <dbReference type="ChEBI" id="CHEBI:58115"/>
        <dbReference type="ChEBI" id="CHEBI:60487"/>
        <dbReference type="EC" id="2.7.8.26"/>
    </reaction>
</comment>
<comment type="catalytic activity">
    <reaction evidence="1">
        <text>alpha-ribazole 5'-phosphate + adenosylcob(III)inamide-GDP = adenosylcob(III)alamin 5'-phosphate + GMP + H(+)</text>
        <dbReference type="Rhea" id="RHEA:23560"/>
        <dbReference type="ChEBI" id="CHEBI:15378"/>
        <dbReference type="ChEBI" id="CHEBI:57918"/>
        <dbReference type="ChEBI" id="CHEBI:58115"/>
        <dbReference type="ChEBI" id="CHEBI:60487"/>
        <dbReference type="ChEBI" id="CHEBI:60493"/>
        <dbReference type="EC" id="2.7.8.26"/>
    </reaction>
</comment>
<comment type="cofactor">
    <cofactor evidence="1">
        <name>Mg(2+)</name>
        <dbReference type="ChEBI" id="CHEBI:18420"/>
    </cofactor>
</comment>
<comment type="pathway">
    <text evidence="1">Cofactor biosynthesis; adenosylcobalamin biosynthesis; adenosylcobalamin from cob(II)yrinate a,c-diamide: step 7/7.</text>
</comment>
<comment type="subcellular location">
    <subcellularLocation>
        <location evidence="1">Cell inner membrane</location>
        <topology evidence="1">Multi-pass membrane protein</topology>
    </subcellularLocation>
</comment>
<comment type="similarity">
    <text evidence="1">Belongs to the CobS family.</text>
</comment>
<protein>
    <recommendedName>
        <fullName evidence="1">Adenosylcobinamide-GDP ribazoletransferase</fullName>
        <ecNumber evidence="1">2.7.8.26</ecNumber>
    </recommendedName>
    <alternativeName>
        <fullName evidence="1">Cobalamin synthase</fullName>
    </alternativeName>
    <alternativeName>
        <fullName evidence="1">Cobalamin-5'-phosphate synthase</fullName>
    </alternativeName>
</protein>